<gene>
    <name evidence="1" type="primary">hemE</name>
    <name type="ordered locus">Acry_2475</name>
</gene>
<accession>A5G1D5</accession>
<comment type="function">
    <text evidence="1">Catalyzes the decarboxylation of four acetate groups of uroporphyrinogen-III to yield coproporphyrinogen-III.</text>
</comment>
<comment type="catalytic activity">
    <reaction evidence="1">
        <text>uroporphyrinogen III + 4 H(+) = coproporphyrinogen III + 4 CO2</text>
        <dbReference type="Rhea" id="RHEA:19865"/>
        <dbReference type="ChEBI" id="CHEBI:15378"/>
        <dbReference type="ChEBI" id="CHEBI:16526"/>
        <dbReference type="ChEBI" id="CHEBI:57308"/>
        <dbReference type="ChEBI" id="CHEBI:57309"/>
        <dbReference type="EC" id="4.1.1.37"/>
    </reaction>
</comment>
<comment type="pathway">
    <text evidence="1">Porphyrin-containing compound metabolism; protoporphyrin-IX biosynthesis; coproporphyrinogen-III from 5-aminolevulinate: step 4/4.</text>
</comment>
<comment type="subunit">
    <text evidence="1">Homodimer.</text>
</comment>
<comment type="subcellular location">
    <subcellularLocation>
        <location evidence="1">Cytoplasm</location>
    </subcellularLocation>
</comment>
<comment type="similarity">
    <text evidence="1">Belongs to the uroporphyrinogen decarboxylase family.</text>
</comment>
<name>DCUP_ACICJ</name>
<protein>
    <recommendedName>
        <fullName evidence="1">Uroporphyrinogen decarboxylase</fullName>
        <shortName evidence="1">UPD</shortName>
        <shortName evidence="1">URO-D</shortName>
        <ecNumber evidence="1">4.1.1.37</ecNumber>
    </recommendedName>
</protein>
<feature type="chain" id="PRO_0000325617" description="Uroporphyrinogen decarboxylase">
    <location>
        <begin position="1"/>
        <end position="358"/>
    </location>
</feature>
<feature type="binding site" evidence="1">
    <location>
        <begin position="28"/>
        <end position="32"/>
    </location>
    <ligand>
        <name>substrate</name>
    </ligand>
</feature>
<feature type="binding site" evidence="1">
    <location>
        <position position="78"/>
    </location>
    <ligand>
        <name>substrate</name>
    </ligand>
</feature>
<feature type="binding site" evidence="1">
    <location>
        <position position="154"/>
    </location>
    <ligand>
        <name>substrate</name>
    </ligand>
</feature>
<feature type="binding site" evidence="1">
    <location>
        <position position="208"/>
    </location>
    <ligand>
        <name>substrate</name>
    </ligand>
</feature>
<feature type="binding site" evidence="1">
    <location>
        <position position="324"/>
    </location>
    <ligand>
        <name>substrate</name>
    </ligand>
</feature>
<feature type="site" description="Transition state stabilizer" evidence="1">
    <location>
        <position position="78"/>
    </location>
</feature>
<keyword id="KW-0963">Cytoplasm</keyword>
<keyword id="KW-0210">Decarboxylase</keyword>
<keyword id="KW-0456">Lyase</keyword>
<keyword id="KW-0627">Porphyrin biosynthesis</keyword>
<keyword id="KW-1185">Reference proteome</keyword>
<proteinExistence type="inferred from homology"/>
<organism>
    <name type="scientific">Acidiphilium cryptum (strain JF-5)</name>
    <dbReference type="NCBI Taxonomy" id="349163"/>
    <lineage>
        <taxon>Bacteria</taxon>
        <taxon>Pseudomonadati</taxon>
        <taxon>Pseudomonadota</taxon>
        <taxon>Alphaproteobacteria</taxon>
        <taxon>Acetobacterales</taxon>
        <taxon>Acidocellaceae</taxon>
        <taxon>Acidiphilium</taxon>
    </lineage>
</organism>
<sequence>MTGQRAEKPVLRVLGGEAVWPPPVWLMRQAGRYLPEYRKLREKAGNFIALCTTPPLATEVTLQPVRRFGMDAAILFSDILILPWALGQKLRFAEGEGPRLERIDGLAGLEALDPAALRQGTEPVMETVSRVRAELPPETTLIGFAGSPFTVACYMIDGRGGDFPLTREVAYADPALLAAVIETVTTATIDYLSWQIEAGADCVMLFDSWAGLLPPDLFRAHVIHPTARIVEQLRVRHPGVKVIGFPRLGGLMTLPYIADTGVDAVGMDTSVDPVALARLAPRRVAFQGNLDPLLLRAGGISLGQAVERIARGLEGHPHIFNLGHGIVPDTPPEHVAAVIERLRSLEPGELEESALAAT</sequence>
<reference key="1">
    <citation type="submission" date="2007-05" db="EMBL/GenBank/DDBJ databases">
        <title>Complete sequence of chromosome of Acidiphilium cryptum JF-5.</title>
        <authorList>
            <consortium name="US DOE Joint Genome Institute"/>
            <person name="Copeland A."/>
            <person name="Lucas S."/>
            <person name="Lapidus A."/>
            <person name="Barry K."/>
            <person name="Detter J.C."/>
            <person name="Glavina del Rio T."/>
            <person name="Hammon N."/>
            <person name="Israni S."/>
            <person name="Dalin E."/>
            <person name="Tice H."/>
            <person name="Pitluck S."/>
            <person name="Sims D."/>
            <person name="Brettin T."/>
            <person name="Bruce D."/>
            <person name="Han C."/>
            <person name="Schmutz J."/>
            <person name="Larimer F."/>
            <person name="Land M."/>
            <person name="Hauser L."/>
            <person name="Kyrpides N."/>
            <person name="Kim E."/>
            <person name="Magnuson T."/>
            <person name="Richardson P."/>
        </authorList>
    </citation>
    <scope>NUCLEOTIDE SEQUENCE [LARGE SCALE GENOMIC DNA]</scope>
    <source>
        <strain>JF-5</strain>
    </source>
</reference>
<evidence type="ECO:0000255" key="1">
    <source>
        <dbReference type="HAMAP-Rule" id="MF_00218"/>
    </source>
</evidence>
<dbReference type="EC" id="4.1.1.37" evidence="1"/>
<dbReference type="EMBL" id="CP000697">
    <property type="protein sequence ID" value="ABQ31667.1"/>
    <property type="molecule type" value="Genomic_DNA"/>
</dbReference>
<dbReference type="RefSeq" id="WP_012040086.1">
    <property type="nucleotide sequence ID" value="NC_009484.1"/>
</dbReference>
<dbReference type="SMR" id="A5G1D5"/>
<dbReference type="STRING" id="349163.Acry_2475"/>
<dbReference type="KEGG" id="acr:Acry_2475"/>
<dbReference type="eggNOG" id="COG0407">
    <property type="taxonomic scope" value="Bacteria"/>
</dbReference>
<dbReference type="HOGENOM" id="CLU_040933_0_0_5"/>
<dbReference type="UniPathway" id="UPA00251">
    <property type="reaction ID" value="UER00321"/>
</dbReference>
<dbReference type="Proteomes" id="UP000000245">
    <property type="component" value="Chromosome"/>
</dbReference>
<dbReference type="GO" id="GO:0005829">
    <property type="term" value="C:cytosol"/>
    <property type="evidence" value="ECO:0007669"/>
    <property type="project" value="TreeGrafter"/>
</dbReference>
<dbReference type="GO" id="GO:0004853">
    <property type="term" value="F:uroporphyrinogen decarboxylase activity"/>
    <property type="evidence" value="ECO:0007669"/>
    <property type="project" value="UniProtKB-UniRule"/>
</dbReference>
<dbReference type="GO" id="GO:0019353">
    <property type="term" value="P:protoporphyrinogen IX biosynthetic process from glutamate"/>
    <property type="evidence" value="ECO:0007669"/>
    <property type="project" value="TreeGrafter"/>
</dbReference>
<dbReference type="CDD" id="cd00717">
    <property type="entry name" value="URO-D"/>
    <property type="match status" value="1"/>
</dbReference>
<dbReference type="Gene3D" id="3.20.20.210">
    <property type="match status" value="1"/>
</dbReference>
<dbReference type="HAMAP" id="MF_00218">
    <property type="entry name" value="URO_D"/>
    <property type="match status" value="1"/>
</dbReference>
<dbReference type="InterPro" id="IPR038071">
    <property type="entry name" value="UROD/MetE-like_sf"/>
</dbReference>
<dbReference type="InterPro" id="IPR006361">
    <property type="entry name" value="Uroporphyrinogen_deCO2ase_HemE"/>
</dbReference>
<dbReference type="InterPro" id="IPR000257">
    <property type="entry name" value="Uroporphyrinogen_deCOase"/>
</dbReference>
<dbReference type="NCBIfam" id="TIGR01464">
    <property type="entry name" value="hemE"/>
    <property type="match status" value="1"/>
</dbReference>
<dbReference type="PANTHER" id="PTHR21091">
    <property type="entry name" value="METHYLTETRAHYDROFOLATE:HOMOCYSTEINE METHYLTRANSFERASE RELATED"/>
    <property type="match status" value="1"/>
</dbReference>
<dbReference type="PANTHER" id="PTHR21091:SF169">
    <property type="entry name" value="UROPORPHYRINOGEN DECARBOXYLASE"/>
    <property type="match status" value="1"/>
</dbReference>
<dbReference type="Pfam" id="PF01208">
    <property type="entry name" value="URO-D"/>
    <property type="match status" value="1"/>
</dbReference>
<dbReference type="SUPFAM" id="SSF51726">
    <property type="entry name" value="UROD/MetE-like"/>
    <property type="match status" value="1"/>
</dbReference>
<dbReference type="PROSITE" id="PS00906">
    <property type="entry name" value="UROD_1"/>
    <property type="match status" value="1"/>
</dbReference>
<dbReference type="PROSITE" id="PS00907">
    <property type="entry name" value="UROD_2"/>
    <property type="match status" value="1"/>
</dbReference>